<accession>Q5HCM9</accession>
<protein>
    <recommendedName>
        <fullName>Poly-beta-1,6-N-acetyl-D-glucosamine N-deacetylase</fullName>
        <shortName>PNAG N-deacetylase</shortName>
        <shortName>Poly-beta-1,6-GlcNAc N-deacetylase</shortName>
        <ecNumber>3.5.1.-</ecNumber>
    </recommendedName>
    <alternativeName>
        <fullName>Biofilm polysaccharide intercellular adhesin deacetylase</fullName>
        <shortName>Biofilm PIA deacetylase</shortName>
    </alternativeName>
    <alternativeName>
        <fullName>Intercellular adhesion protein B</fullName>
    </alternativeName>
</protein>
<evidence type="ECO:0000250" key="1"/>
<evidence type="ECO:0000255" key="2"/>
<evidence type="ECO:0000255" key="3">
    <source>
        <dbReference type="PROSITE-ProRule" id="PRU01014"/>
    </source>
</evidence>
<evidence type="ECO:0000305" key="4"/>
<feature type="signal peptide" evidence="2">
    <location>
        <begin position="1"/>
        <end position="28"/>
    </location>
</feature>
<feature type="chain" id="PRO_0000024834" description="Poly-beta-1,6-N-acetyl-D-glucosamine N-deacetylase">
    <location>
        <begin position="29"/>
        <end position="292"/>
    </location>
</feature>
<feature type="domain" description="NodB homology" evidence="3">
    <location>
        <begin position="114"/>
        <end position="292"/>
    </location>
</feature>
<sequence>MKYRKFIILVLSILIILPVSTLDGHHIANADDDSPKKLKYKENSALALNYHRVRKANFLNNFIYFFSSSKEIKNYSVSQSQFESQIKWLKSHDAKFLTLKEFLYYKKKGKFPKRSVWINFDDMDETIYENAYPILKKYKIPATGFIITGHVGEENFHNLDMISKKELKEMYKTGLWEFETHTHDLHNLSKNNKSKLMKASEATIIKDLNKSEKYLTKNFKKSQKTIAYPYGLMNDDKLPVIKKAGLKYGFSLEEKAVTPNSNDYYIPRILISDDAFEHLIKRWDGFHEKDET</sequence>
<gene>
    <name type="primary">icaB</name>
    <name type="ordered locus">SACOL2691</name>
</gene>
<organism>
    <name type="scientific">Staphylococcus aureus (strain COL)</name>
    <dbReference type="NCBI Taxonomy" id="93062"/>
    <lineage>
        <taxon>Bacteria</taxon>
        <taxon>Bacillati</taxon>
        <taxon>Bacillota</taxon>
        <taxon>Bacilli</taxon>
        <taxon>Bacillales</taxon>
        <taxon>Staphylococcaceae</taxon>
        <taxon>Staphylococcus</taxon>
    </lineage>
</organism>
<name>ICAB_STAAC</name>
<keyword id="KW-0134">Cell wall</keyword>
<keyword id="KW-0378">Hydrolase</keyword>
<keyword id="KW-0964">Secreted</keyword>
<keyword id="KW-0732">Signal</keyword>
<proteinExistence type="inferred from homology"/>
<reference key="1">
    <citation type="journal article" date="2005" name="J. Bacteriol.">
        <title>Insights on evolution of virulence and resistance from the complete genome analysis of an early methicillin-resistant Staphylococcus aureus strain and a biofilm-producing methicillin-resistant Staphylococcus epidermidis strain.</title>
        <authorList>
            <person name="Gill S.R."/>
            <person name="Fouts D.E."/>
            <person name="Archer G.L."/>
            <person name="Mongodin E.F."/>
            <person name="DeBoy R.T."/>
            <person name="Ravel J."/>
            <person name="Paulsen I.T."/>
            <person name="Kolonay J.F."/>
            <person name="Brinkac L.M."/>
            <person name="Beanan M.J."/>
            <person name="Dodson R.J."/>
            <person name="Daugherty S.C."/>
            <person name="Madupu R."/>
            <person name="Angiuoli S.V."/>
            <person name="Durkin A.S."/>
            <person name="Haft D.H."/>
            <person name="Vamathevan J.J."/>
            <person name="Khouri H."/>
            <person name="Utterback T.R."/>
            <person name="Lee C."/>
            <person name="Dimitrov G."/>
            <person name="Jiang L."/>
            <person name="Qin H."/>
            <person name="Weidman J."/>
            <person name="Tran K."/>
            <person name="Kang K.H."/>
            <person name="Hance I.R."/>
            <person name="Nelson K.E."/>
            <person name="Fraser C.M."/>
        </authorList>
    </citation>
    <scope>NUCLEOTIDE SEQUENCE [LARGE SCALE GENOMIC DNA]</scope>
    <source>
        <strain>COL</strain>
    </source>
</reference>
<comment type="function">
    <text evidence="1">Catalyzes the N-deacetylation of poly-beta-1,6-N-acetyl-D-glucosamine (PNAG, also referred to as PIA), a biofilm adhesin polysaccharide. N-deacetylation is crucial for attachment of the polysaccharide to the bacterial cell surface; it leads to the introduction of positive charges in the otherwise neutral PIA polymer, allowing electrostatic interactions (By similarity).</text>
</comment>
<comment type="subcellular location">
    <subcellularLocation>
        <location>Secreted</location>
        <location>Cell wall</location>
    </subcellularLocation>
    <text evidence="1">Attached to the cell surface.</text>
</comment>
<comment type="miscellaneous">
    <text>In strain COL, the gene icaC is interrupted by a natural frameshift.</text>
</comment>
<comment type="similarity">
    <text evidence="4">Belongs to the polysaccharide deacetylase family.</text>
</comment>
<dbReference type="EC" id="3.5.1.-"/>
<dbReference type="EMBL" id="CP000046">
    <property type="protein sequence ID" value="AAW37341.1"/>
    <property type="molecule type" value="Genomic_DNA"/>
</dbReference>
<dbReference type="RefSeq" id="WP_000877318.1">
    <property type="nucleotide sequence ID" value="NC_002951.2"/>
</dbReference>
<dbReference type="SMR" id="Q5HCM9"/>
<dbReference type="KEGG" id="sac:SACOL2691"/>
<dbReference type="HOGENOM" id="CLU_030024_3_2_9"/>
<dbReference type="Proteomes" id="UP000000530">
    <property type="component" value="Chromosome"/>
</dbReference>
<dbReference type="GO" id="GO:0005576">
    <property type="term" value="C:extracellular region"/>
    <property type="evidence" value="ECO:0007669"/>
    <property type="project" value="UniProtKB-KW"/>
</dbReference>
<dbReference type="GO" id="GO:0016811">
    <property type="term" value="F:hydrolase activity, acting on carbon-nitrogen (but not peptide) bonds, in linear amides"/>
    <property type="evidence" value="ECO:0007669"/>
    <property type="project" value="InterPro"/>
</dbReference>
<dbReference type="GO" id="GO:0005975">
    <property type="term" value="P:carbohydrate metabolic process"/>
    <property type="evidence" value="ECO:0007669"/>
    <property type="project" value="InterPro"/>
</dbReference>
<dbReference type="Gene3D" id="3.20.20.370">
    <property type="entry name" value="Glycoside hydrolase/deacetylase"/>
    <property type="match status" value="1"/>
</dbReference>
<dbReference type="InterPro" id="IPR011330">
    <property type="entry name" value="Glyco_hydro/deAcase_b/a-brl"/>
</dbReference>
<dbReference type="InterPro" id="IPR002509">
    <property type="entry name" value="NODB_dom"/>
</dbReference>
<dbReference type="InterPro" id="IPR023872">
    <property type="entry name" value="PNAG_deacetylase"/>
</dbReference>
<dbReference type="InterPro" id="IPR051398">
    <property type="entry name" value="Polysacch_Deacetylase"/>
</dbReference>
<dbReference type="NCBIfam" id="TIGR03933">
    <property type="entry name" value="PIA_icaB"/>
    <property type="match status" value="1"/>
</dbReference>
<dbReference type="PANTHER" id="PTHR34216">
    <property type="match status" value="1"/>
</dbReference>
<dbReference type="PANTHER" id="PTHR34216:SF3">
    <property type="entry name" value="POLY-BETA-1,6-N-ACETYL-D-GLUCOSAMINE N-DEACETYLASE"/>
    <property type="match status" value="1"/>
</dbReference>
<dbReference type="Pfam" id="PF01522">
    <property type="entry name" value="Polysacc_deac_1"/>
    <property type="match status" value="1"/>
</dbReference>
<dbReference type="SUPFAM" id="SSF88713">
    <property type="entry name" value="Glycoside hydrolase/deacetylase"/>
    <property type="match status" value="1"/>
</dbReference>
<dbReference type="PROSITE" id="PS51677">
    <property type="entry name" value="NODB"/>
    <property type="match status" value="1"/>
</dbReference>